<evidence type="ECO:0000255" key="1">
    <source>
        <dbReference type="HAMAP-Rule" id="MF_01157"/>
    </source>
</evidence>
<gene>
    <name evidence="1" type="primary">diaA</name>
    <name type="ordered locus">SBO_3233</name>
</gene>
<organism>
    <name type="scientific">Shigella boydii serotype 4 (strain Sb227)</name>
    <dbReference type="NCBI Taxonomy" id="300268"/>
    <lineage>
        <taxon>Bacteria</taxon>
        <taxon>Pseudomonadati</taxon>
        <taxon>Pseudomonadota</taxon>
        <taxon>Gammaproteobacteria</taxon>
        <taxon>Enterobacterales</taxon>
        <taxon>Enterobacteriaceae</taxon>
        <taxon>Shigella</taxon>
    </lineage>
</organism>
<name>DIAA_SHIBS</name>
<proteinExistence type="inferred from homology"/>
<keyword id="KW-0235">DNA replication</keyword>
<comment type="function">
    <text evidence="1">Required for the timely initiation of chromosomal replication via direct interactions with the DnaA initiator protein.</text>
</comment>
<comment type="subunit">
    <text evidence="1">Homotetramer; dimer of dimers.</text>
</comment>
<comment type="similarity">
    <text evidence="1">Belongs to the SIS family. DiaA subfamily.</text>
</comment>
<sequence length="196" mass="21106">MQERIKACFTESIQTQIAAAEALPDAISRAAMTLVQSLLNGNKILCCGNGTSAANAQHFAASMINRFETERPSLPAIALNTDNVVLTAIANDRLHDEVYAKQVRALGHAGDVLLAISTRGNSRDIVKAVEAAVTRDMTIVALTGYDGGELAGLLGPQDVEIRIPSHRSARIQEMHMLTVNCLCDLIDNTLFPHQDD</sequence>
<dbReference type="EMBL" id="CP000036">
    <property type="protein sequence ID" value="ABB67730.1"/>
    <property type="molecule type" value="Genomic_DNA"/>
</dbReference>
<dbReference type="RefSeq" id="WP_001158034.1">
    <property type="nucleotide sequence ID" value="NC_007613.1"/>
</dbReference>
<dbReference type="SMR" id="Q31W28"/>
<dbReference type="GeneID" id="93778835"/>
<dbReference type="KEGG" id="sbo:SBO_3233"/>
<dbReference type="HOGENOM" id="CLU_080999_3_1_6"/>
<dbReference type="Proteomes" id="UP000007067">
    <property type="component" value="Chromosome"/>
</dbReference>
<dbReference type="GO" id="GO:0097367">
    <property type="term" value="F:carbohydrate derivative binding"/>
    <property type="evidence" value="ECO:0007669"/>
    <property type="project" value="InterPro"/>
</dbReference>
<dbReference type="GO" id="GO:1901135">
    <property type="term" value="P:carbohydrate derivative metabolic process"/>
    <property type="evidence" value="ECO:0007669"/>
    <property type="project" value="InterPro"/>
</dbReference>
<dbReference type="GO" id="GO:0006260">
    <property type="term" value="P:DNA replication"/>
    <property type="evidence" value="ECO:0007669"/>
    <property type="project" value="UniProtKB-UniRule"/>
</dbReference>
<dbReference type="CDD" id="cd05006">
    <property type="entry name" value="SIS_GmhA"/>
    <property type="match status" value="1"/>
</dbReference>
<dbReference type="FunFam" id="3.40.50.10490:FF:000006">
    <property type="entry name" value="DnaA initiator-associating protein DiaA"/>
    <property type="match status" value="1"/>
</dbReference>
<dbReference type="Gene3D" id="3.40.50.10490">
    <property type="entry name" value="Glucose-6-phosphate isomerase like protein, domain 1"/>
    <property type="match status" value="1"/>
</dbReference>
<dbReference type="HAMAP" id="MF_01157">
    <property type="entry name" value="SIS_DiaA"/>
    <property type="match status" value="1"/>
</dbReference>
<dbReference type="InterPro" id="IPR023070">
    <property type="entry name" value="DiaA"/>
</dbReference>
<dbReference type="InterPro" id="IPR035461">
    <property type="entry name" value="GmhA/DiaA"/>
</dbReference>
<dbReference type="InterPro" id="IPR001347">
    <property type="entry name" value="SIS_dom"/>
</dbReference>
<dbReference type="InterPro" id="IPR046348">
    <property type="entry name" value="SIS_dom_sf"/>
</dbReference>
<dbReference type="InterPro" id="IPR050099">
    <property type="entry name" value="SIS_GmhA/DiaA_subfam"/>
</dbReference>
<dbReference type="NCBIfam" id="NF008138">
    <property type="entry name" value="PRK10886.1"/>
    <property type="match status" value="1"/>
</dbReference>
<dbReference type="NCBIfam" id="NF010546">
    <property type="entry name" value="PRK13936.1"/>
    <property type="match status" value="1"/>
</dbReference>
<dbReference type="PANTHER" id="PTHR30390:SF6">
    <property type="entry name" value="DNAA INITIATOR-ASSOCIATING PROTEIN DIAA"/>
    <property type="match status" value="1"/>
</dbReference>
<dbReference type="PANTHER" id="PTHR30390">
    <property type="entry name" value="SEDOHEPTULOSE 7-PHOSPHATE ISOMERASE / DNAA INITIATOR-ASSOCIATING FACTOR FOR REPLICATION INITIATION"/>
    <property type="match status" value="1"/>
</dbReference>
<dbReference type="Pfam" id="PF13580">
    <property type="entry name" value="SIS_2"/>
    <property type="match status" value="1"/>
</dbReference>
<dbReference type="SUPFAM" id="SSF53697">
    <property type="entry name" value="SIS domain"/>
    <property type="match status" value="1"/>
</dbReference>
<dbReference type="PROSITE" id="PS51464">
    <property type="entry name" value="SIS"/>
    <property type="match status" value="1"/>
</dbReference>
<reference key="1">
    <citation type="journal article" date="2005" name="Nucleic Acids Res.">
        <title>Genome dynamics and diversity of Shigella species, the etiologic agents of bacillary dysentery.</title>
        <authorList>
            <person name="Yang F."/>
            <person name="Yang J."/>
            <person name="Zhang X."/>
            <person name="Chen L."/>
            <person name="Jiang Y."/>
            <person name="Yan Y."/>
            <person name="Tang X."/>
            <person name="Wang J."/>
            <person name="Xiong Z."/>
            <person name="Dong J."/>
            <person name="Xue Y."/>
            <person name="Zhu Y."/>
            <person name="Xu X."/>
            <person name="Sun L."/>
            <person name="Chen S."/>
            <person name="Nie H."/>
            <person name="Peng J."/>
            <person name="Xu J."/>
            <person name="Wang Y."/>
            <person name="Yuan Z."/>
            <person name="Wen Y."/>
            <person name="Yao Z."/>
            <person name="Shen Y."/>
            <person name="Qiang B."/>
            <person name="Hou Y."/>
            <person name="Yu J."/>
            <person name="Jin Q."/>
        </authorList>
    </citation>
    <scope>NUCLEOTIDE SEQUENCE [LARGE SCALE GENOMIC DNA]</scope>
    <source>
        <strain>Sb227</strain>
    </source>
</reference>
<protein>
    <recommendedName>
        <fullName evidence="1">DnaA initiator-associating protein DiaA</fullName>
    </recommendedName>
</protein>
<feature type="chain" id="PRO_1000065549" description="DnaA initiator-associating protein DiaA">
    <location>
        <begin position="1"/>
        <end position="196"/>
    </location>
</feature>
<feature type="domain" description="SIS" evidence="1">
    <location>
        <begin position="34"/>
        <end position="196"/>
    </location>
</feature>
<accession>Q31W28</accession>